<geneLocation type="chloroplast"/>
<dbReference type="EC" id="7.1.1.-" evidence="1"/>
<dbReference type="EMBL" id="AE009947">
    <property type="protein sequence ID" value="AAT44653.1"/>
    <property type="status" value="ALT_SEQ"/>
    <property type="molecule type" value="Genomic_DNA"/>
</dbReference>
<dbReference type="SMR" id="Q6L3E0"/>
<dbReference type="GO" id="GO:0009535">
    <property type="term" value="C:chloroplast thylakoid membrane"/>
    <property type="evidence" value="ECO:0007669"/>
    <property type="project" value="UniProtKB-SubCell"/>
</dbReference>
<dbReference type="GO" id="GO:0008137">
    <property type="term" value="F:NADH dehydrogenase (ubiquinone) activity"/>
    <property type="evidence" value="ECO:0007669"/>
    <property type="project" value="InterPro"/>
</dbReference>
<dbReference type="GO" id="GO:0048039">
    <property type="term" value="F:ubiquinone binding"/>
    <property type="evidence" value="ECO:0007669"/>
    <property type="project" value="TreeGrafter"/>
</dbReference>
<dbReference type="GO" id="GO:0042773">
    <property type="term" value="P:ATP synthesis coupled electron transport"/>
    <property type="evidence" value="ECO:0007669"/>
    <property type="project" value="InterPro"/>
</dbReference>
<dbReference type="GO" id="GO:0015990">
    <property type="term" value="P:electron transport coupled proton transport"/>
    <property type="evidence" value="ECO:0007669"/>
    <property type="project" value="TreeGrafter"/>
</dbReference>
<dbReference type="HAMAP" id="MF_00491">
    <property type="entry name" value="NDH1_NuoM"/>
    <property type="match status" value="1"/>
</dbReference>
<dbReference type="InterPro" id="IPR022997">
    <property type="entry name" value="NADH_Q_OxRdtase_chain4"/>
</dbReference>
<dbReference type="InterPro" id="IPR010227">
    <property type="entry name" value="NADH_Q_OxRdtase_chainM/4"/>
</dbReference>
<dbReference type="InterPro" id="IPR003918">
    <property type="entry name" value="NADH_UbQ_OxRdtase"/>
</dbReference>
<dbReference type="InterPro" id="IPR001750">
    <property type="entry name" value="ND/Mrp_TM"/>
</dbReference>
<dbReference type="NCBIfam" id="TIGR01972">
    <property type="entry name" value="NDH_I_M"/>
    <property type="match status" value="1"/>
</dbReference>
<dbReference type="PANTHER" id="PTHR43507:SF21">
    <property type="entry name" value="NAD(P)H-QUINONE OXIDOREDUCTASE CHAIN 4, CHLOROPLASTIC"/>
    <property type="match status" value="1"/>
</dbReference>
<dbReference type="PANTHER" id="PTHR43507">
    <property type="entry name" value="NADH-UBIQUINONE OXIDOREDUCTASE CHAIN 4"/>
    <property type="match status" value="1"/>
</dbReference>
<dbReference type="Pfam" id="PF00361">
    <property type="entry name" value="Proton_antipo_M"/>
    <property type="match status" value="1"/>
</dbReference>
<dbReference type="PRINTS" id="PR01437">
    <property type="entry name" value="NUOXDRDTASE4"/>
</dbReference>
<sequence>MSYFPWLTILVVLPIFAGSLIFFLPHKGNKIVRWYTIAICLLEFLIMTYAFCYHFQLEDPLIQLKEDSKWIDVFDFHWRLGIDGLSLGSILLTGFITTLATLAAWPVTRNSQLFYFLMLAMYSGQIGLFSSRDLLLFFIMWELELIPVYLLLSMWGGKRRLYSATKFILYTAGGSIFFLIGVLGMGLYGSNEPGLDLERLINQSYPTTLEILLYFGFLIAYAVKLPIIPLHTWLPDTHGEAHYSTCMLLAGILLKMGAYGLIRVNMELLPHAHYLFSPWLVIIGAVQIIYAALTSLGQRNFKKRIAYSSVSHMGFIIIGIGSITNIGLNGAILQILSHGFIGATLFFLAGTACDRMRLVYLEELGGISIPMPKIFTMFSSFSMASLALPGMSGFVAELVVFFGLITSPKFMLMPKMLITFVMAIGMILTPIYLLSMLRQMFYGYKLFHVPNKNFVDSGPRELFLLICIFLPVIGIGIYPDFVLSLSVDRVEVLLSNYYTK</sequence>
<gene>
    <name evidence="1" type="primary">ndhD</name>
    <name type="ordered locus">PS042</name>
</gene>
<accession>Q6L3E0</accession>
<keyword id="KW-0150">Chloroplast</keyword>
<keyword id="KW-0472">Membrane</keyword>
<keyword id="KW-0520">NAD</keyword>
<keyword id="KW-0521">NADP</keyword>
<keyword id="KW-0934">Plastid</keyword>
<keyword id="KW-0618">Plastoquinone</keyword>
<keyword id="KW-0874">Quinone</keyword>
<keyword id="KW-0691">RNA editing</keyword>
<keyword id="KW-0793">Thylakoid</keyword>
<keyword id="KW-1278">Translocase</keyword>
<keyword id="KW-0812">Transmembrane</keyword>
<keyword id="KW-1133">Transmembrane helix</keyword>
<reference key="1">
    <citation type="journal article" date="2004" name="Curr. Genet.">
        <title>Structural features and transcript-editing analysis of sugarcane (Saccharum officinarum L.) chloroplast genome.</title>
        <authorList>
            <person name="Calsa T. Jr."/>
            <person name="Carraro D.M."/>
            <person name="Benatti M.R."/>
            <person name="Barbosa A.C."/>
            <person name="Kitajima J.P."/>
            <person name="Carrer H."/>
        </authorList>
    </citation>
    <scope>NUCLEOTIDE SEQUENCE [LARGE SCALE GENOMIC DNA]</scope>
    <scope>RNA EDITING</scope>
    <source>
        <strain>cv. SP-80-3280</strain>
    </source>
</reference>
<protein>
    <recommendedName>
        <fullName evidence="1">NAD(P)H-quinone oxidoreductase chain 4, chloroplastic</fullName>
        <ecNumber evidence="1">7.1.1.-</ecNumber>
    </recommendedName>
    <alternativeName>
        <fullName evidence="1">NAD(P)H dehydrogenase, chain 4</fullName>
    </alternativeName>
    <alternativeName>
        <fullName evidence="1">NADH-plastoquinone oxidoreductase chain 4</fullName>
    </alternativeName>
</protein>
<proteinExistence type="evidence at transcript level"/>
<feature type="chain" id="PRO_0000118028" description="NAD(P)H-quinone oxidoreductase chain 4, chloroplastic">
    <location>
        <begin position="1"/>
        <end position="500"/>
    </location>
</feature>
<feature type="transmembrane region" description="Helical" evidence="1">
    <location>
        <begin position="4"/>
        <end position="24"/>
    </location>
</feature>
<feature type="transmembrane region" description="Helical" evidence="1">
    <location>
        <begin position="35"/>
        <end position="55"/>
    </location>
</feature>
<feature type="transmembrane region" description="Helical" evidence="1">
    <location>
        <begin position="87"/>
        <end position="107"/>
    </location>
</feature>
<feature type="transmembrane region" description="Helical" evidence="1">
    <location>
        <begin position="111"/>
        <end position="131"/>
    </location>
</feature>
<feature type="transmembrane region" description="Helical" evidence="1">
    <location>
        <begin position="134"/>
        <end position="154"/>
    </location>
</feature>
<feature type="transmembrane region" description="Helical" evidence="1">
    <location>
        <begin position="167"/>
        <end position="187"/>
    </location>
</feature>
<feature type="transmembrane region" description="Helical" evidence="1">
    <location>
        <begin position="211"/>
        <end position="231"/>
    </location>
</feature>
<feature type="transmembrane region" description="Helical" evidence="1">
    <location>
        <begin position="242"/>
        <end position="262"/>
    </location>
</feature>
<feature type="transmembrane region" description="Helical" evidence="1">
    <location>
        <begin position="274"/>
        <end position="294"/>
    </location>
</feature>
<feature type="transmembrane region" description="Helical" evidence="1">
    <location>
        <begin position="313"/>
        <end position="333"/>
    </location>
</feature>
<feature type="transmembrane region" description="Helical" evidence="1">
    <location>
        <begin position="334"/>
        <end position="354"/>
    </location>
</feature>
<feature type="transmembrane region" description="Helical" evidence="1">
    <location>
        <begin position="386"/>
        <end position="406"/>
    </location>
</feature>
<feature type="transmembrane region" description="Helical" evidence="1">
    <location>
        <begin position="417"/>
        <end position="437"/>
    </location>
</feature>
<feature type="transmembrane region" description="Helical" evidence="1">
    <location>
        <begin position="462"/>
        <end position="482"/>
    </location>
</feature>
<organism>
    <name type="scientific">Saccharum hybrid</name>
    <name type="common">Sugarcane</name>
    <dbReference type="NCBI Taxonomy" id="15819"/>
    <lineage>
        <taxon>Eukaryota</taxon>
        <taxon>Viridiplantae</taxon>
        <taxon>Streptophyta</taxon>
        <taxon>Embryophyta</taxon>
        <taxon>Tracheophyta</taxon>
        <taxon>Spermatophyta</taxon>
        <taxon>Magnoliopsida</taxon>
        <taxon>Liliopsida</taxon>
        <taxon>Poales</taxon>
        <taxon>Poaceae</taxon>
        <taxon>PACMAD clade</taxon>
        <taxon>Panicoideae</taxon>
        <taxon>Andropogonodae</taxon>
        <taxon>Andropogoneae</taxon>
        <taxon>Saccharinae</taxon>
        <taxon>Saccharum</taxon>
    </lineage>
</organism>
<name>NU4C_SACHY</name>
<comment type="catalytic activity">
    <reaction evidence="1">
        <text>a plastoquinone + NADH + (n+1) H(+)(in) = a plastoquinol + NAD(+) + n H(+)(out)</text>
        <dbReference type="Rhea" id="RHEA:42608"/>
        <dbReference type="Rhea" id="RHEA-COMP:9561"/>
        <dbReference type="Rhea" id="RHEA-COMP:9562"/>
        <dbReference type="ChEBI" id="CHEBI:15378"/>
        <dbReference type="ChEBI" id="CHEBI:17757"/>
        <dbReference type="ChEBI" id="CHEBI:57540"/>
        <dbReference type="ChEBI" id="CHEBI:57945"/>
        <dbReference type="ChEBI" id="CHEBI:62192"/>
    </reaction>
</comment>
<comment type="catalytic activity">
    <reaction evidence="1">
        <text>a plastoquinone + NADPH + (n+1) H(+)(in) = a plastoquinol + NADP(+) + n H(+)(out)</text>
        <dbReference type="Rhea" id="RHEA:42612"/>
        <dbReference type="Rhea" id="RHEA-COMP:9561"/>
        <dbReference type="Rhea" id="RHEA-COMP:9562"/>
        <dbReference type="ChEBI" id="CHEBI:15378"/>
        <dbReference type="ChEBI" id="CHEBI:17757"/>
        <dbReference type="ChEBI" id="CHEBI:57783"/>
        <dbReference type="ChEBI" id="CHEBI:58349"/>
        <dbReference type="ChEBI" id="CHEBI:62192"/>
    </reaction>
</comment>
<comment type="subcellular location">
    <subcellularLocation>
        <location evidence="1">Plastid</location>
        <location evidence="1">Chloroplast thylakoid membrane</location>
        <topology evidence="1">Multi-pass membrane protein</topology>
    </subcellularLocation>
</comment>
<comment type="RNA editing">
    <location>
        <position position="293" evidence="2"/>
    </location>
</comment>
<comment type="similarity">
    <text evidence="1">Belongs to the complex I subunit 4 family.</text>
</comment>
<evidence type="ECO:0000255" key="1">
    <source>
        <dbReference type="HAMAP-Rule" id="MF_00491"/>
    </source>
</evidence>
<evidence type="ECO:0000269" key="2">
    <source>
    </source>
</evidence>